<feature type="chain" id="PRO_1000098302" description="Probable cytosol aminopeptidase">
    <location>
        <begin position="1"/>
        <end position="499"/>
    </location>
</feature>
<feature type="active site" evidence="1">
    <location>
        <position position="281"/>
    </location>
</feature>
<feature type="active site" evidence="1">
    <location>
        <position position="355"/>
    </location>
</feature>
<feature type="binding site" evidence="1">
    <location>
        <position position="269"/>
    </location>
    <ligand>
        <name>Mn(2+)</name>
        <dbReference type="ChEBI" id="CHEBI:29035"/>
        <label>2</label>
    </ligand>
</feature>
<feature type="binding site" evidence="1">
    <location>
        <position position="274"/>
    </location>
    <ligand>
        <name>Mn(2+)</name>
        <dbReference type="ChEBI" id="CHEBI:29035"/>
        <label>1</label>
    </ligand>
</feature>
<feature type="binding site" evidence="1">
    <location>
        <position position="274"/>
    </location>
    <ligand>
        <name>Mn(2+)</name>
        <dbReference type="ChEBI" id="CHEBI:29035"/>
        <label>2</label>
    </ligand>
</feature>
<feature type="binding site" evidence="1">
    <location>
        <position position="292"/>
    </location>
    <ligand>
        <name>Mn(2+)</name>
        <dbReference type="ChEBI" id="CHEBI:29035"/>
        <label>2</label>
    </ligand>
</feature>
<feature type="binding site" evidence="1">
    <location>
        <position position="351"/>
    </location>
    <ligand>
        <name>Mn(2+)</name>
        <dbReference type="ChEBI" id="CHEBI:29035"/>
        <label>1</label>
    </ligand>
</feature>
<feature type="binding site" evidence="1">
    <location>
        <position position="353"/>
    </location>
    <ligand>
        <name>Mn(2+)</name>
        <dbReference type="ChEBI" id="CHEBI:29035"/>
        <label>1</label>
    </ligand>
</feature>
<feature type="binding site" evidence="1">
    <location>
        <position position="353"/>
    </location>
    <ligand>
        <name>Mn(2+)</name>
        <dbReference type="ChEBI" id="CHEBI:29035"/>
        <label>2</label>
    </ligand>
</feature>
<comment type="function">
    <text evidence="1">Presumably involved in the processing and regular turnover of intracellular proteins. Catalyzes the removal of unsubstituted N-terminal amino acids from various peptides.</text>
</comment>
<comment type="catalytic activity">
    <reaction evidence="1">
        <text>Release of an N-terminal amino acid, Xaa-|-Yaa-, in which Xaa is preferably Leu, but may be other amino acids including Pro although not Arg or Lys, and Yaa may be Pro. Amino acid amides and methyl esters are also readily hydrolyzed, but rates on arylamides are exceedingly low.</text>
        <dbReference type="EC" id="3.4.11.1"/>
    </reaction>
</comment>
<comment type="catalytic activity">
    <reaction evidence="1">
        <text>Release of an N-terminal amino acid, preferentially leucine, but not glutamic or aspartic acids.</text>
        <dbReference type="EC" id="3.4.11.10"/>
    </reaction>
</comment>
<comment type="cofactor">
    <cofactor evidence="1">
        <name>Mn(2+)</name>
        <dbReference type="ChEBI" id="CHEBI:29035"/>
    </cofactor>
    <text evidence="1">Binds 2 manganese ions per subunit.</text>
</comment>
<comment type="subcellular location">
    <subcellularLocation>
        <location evidence="1">Cytoplasm</location>
    </subcellularLocation>
</comment>
<comment type="similarity">
    <text evidence="1">Belongs to the peptidase M17 family.</text>
</comment>
<gene>
    <name evidence="1" type="primary">pepA</name>
    <name type="ordered locus">APJL_1116</name>
</gene>
<organism>
    <name type="scientific">Actinobacillus pleuropneumoniae serotype 3 (strain JL03)</name>
    <dbReference type="NCBI Taxonomy" id="434271"/>
    <lineage>
        <taxon>Bacteria</taxon>
        <taxon>Pseudomonadati</taxon>
        <taxon>Pseudomonadota</taxon>
        <taxon>Gammaproteobacteria</taxon>
        <taxon>Pasteurellales</taxon>
        <taxon>Pasteurellaceae</taxon>
        <taxon>Actinobacillus</taxon>
    </lineage>
</organism>
<proteinExistence type="inferred from homology"/>
<dbReference type="EC" id="3.4.11.1" evidence="1"/>
<dbReference type="EC" id="3.4.11.10" evidence="1"/>
<dbReference type="EMBL" id="CP000687">
    <property type="protein sequence ID" value="ABY69672.1"/>
    <property type="molecule type" value="Genomic_DNA"/>
</dbReference>
<dbReference type="RefSeq" id="WP_012263096.1">
    <property type="nucleotide sequence ID" value="NC_010278.1"/>
</dbReference>
<dbReference type="SMR" id="B0BQ37"/>
<dbReference type="MEROPS" id="M17.003"/>
<dbReference type="KEGG" id="apj:APJL_1116"/>
<dbReference type="HOGENOM" id="CLU_013734_2_2_6"/>
<dbReference type="Proteomes" id="UP000008547">
    <property type="component" value="Chromosome"/>
</dbReference>
<dbReference type="GO" id="GO:0005737">
    <property type="term" value="C:cytoplasm"/>
    <property type="evidence" value="ECO:0007669"/>
    <property type="project" value="UniProtKB-SubCell"/>
</dbReference>
<dbReference type="GO" id="GO:0030145">
    <property type="term" value="F:manganese ion binding"/>
    <property type="evidence" value="ECO:0007669"/>
    <property type="project" value="UniProtKB-UniRule"/>
</dbReference>
<dbReference type="GO" id="GO:0070006">
    <property type="term" value="F:metalloaminopeptidase activity"/>
    <property type="evidence" value="ECO:0007669"/>
    <property type="project" value="InterPro"/>
</dbReference>
<dbReference type="GO" id="GO:0006508">
    <property type="term" value="P:proteolysis"/>
    <property type="evidence" value="ECO:0007669"/>
    <property type="project" value="UniProtKB-KW"/>
</dbReference>
<dbReference type="CDD" id="cd00433">
    <property type="entry name" value="Peptidase_M17"/>
    <property type="match status" value="1"/>
</dbReference>
<dbReference type="FunFam" id="3.40.220.10:FF:000001">
    <property type="entry name" value="Probable cytosol aminopeptidase"/>
    <property type="match status" value="1"/>
</dbReference>
<dbReference type="FunFam" id="3.40.630.10:FF:000004">
    <property type="entry name" value="Probable cytosol aminopeptidase"/>
    <property type="match status" value="1"/>
</dbReference>
<dbReference type="Gene3D" id="3.40.220.10">
    <property type="entry name" value="Leucine Aminopeptidase, subunit E, domain 1"/>
    <property type="match status" value="1"/>
</dbReference>
<dbReference type="Gene3D" id="3.40.630.10">
    <property type="entry name" value="Zn peptidases"/>
    <property type="match status" value="1"/>
</dbReference>
<dbReference type="HAMAP" id="MF_00181">
    <property type="entry name" value="Cytosol_peptidase_M17"/>
    <property type="match status" value="1"/>
</dbReference>
<dbReference type="InterPro" id="IPR011356">
    <property type="entry name" value="Leucine_aapep/pepB"/>
</dbReference>
<dbReference type="InterPro" id="IPR043472">
    <property type="entry name" value="Macro_dom-like"/>
</dbReference>
<dbReference type="InterPro" id="IPR000819">
    <property type="entry name" value="Peptidase_M17_C"/>
</dbReference>
<dbReference type="InterPro" id="IPR023042">
    <property type="entry name" value="Peptidase_M17_leu_NH2_pept"/>
</dbReference>
<dbReference type="InterPro" id="IPR008283">
    <property type="entry name" value="Peptidase_M17_N"/>
</dbReference>
<dbReference type="NCBIfam" id="NF002072">
    <property type="entry name" value="PRK00913.1-1"/>
    <property type="match status" value="1"/>
</dbReference>
<dbReference type="NCBIfam" id="NF002073">
    <property type="entry name" value="PRK00913.1-2"/>
    <property type="match status" value="1"/>
</dbReference>
<dbReference type="NCBIfam" id="NF002074">
    <property type="entry name" value="PRK00913.1-4"/>
    <property type="match status" value="1"/>
</dbReference>
<dbReference type="PANTHER" id="PTHR11963:SF23">
    <property type="entry name" value="CYTOSOL AMINOPEPTIDASE"/>
    <property type="match status" value="1"/>
</dbReference>
<dbReference type="PANTHER" id="PTHR11963">
    <property type="entry name" value="LEUCINE AMINOPEPTIDASE-RELATED"/>
    <property type="match status" value="1"/>
</dbReference>
<dbReference type="Pfam" id="PF00883">
    <property type="entry name" value="Peptidase_M17"/>
    <property type="match status" value="1"/>
</dbReference>
<dbReference type="Pfam" id="PF02789">
    <property type="entry name" value="Peptidase_M17_N"/>
    <property type="match status" value="1"/>
</dbReference>
<dbReference type="PRINTS" id="PR00481">
    <property type="entry name" value="LAMNOPPTDASE"/>
</dbReference>
<dbReference type="SUPFAM" id="SSF52949">
    <property type="entry name" value="Macro domain-like"/>
    <property type="match status" value="1"/>
</dbReference>
<dbReference type="SUPFAM" id="SSF53187">
    <property type="entry name" value="Zn-dependent exopeptidases"/>
    <property type="match status" value="1"/>
</dbReference>
<dbReference type="PROSITE" id="PS00631">
    <property type="entry name" value="CYTOSOL_AP"/>
    <property type="match status" value="1"/>
</dbReference>
<protein>
    <recommendedName>
        <fullName evidence="1">Probable cytosol aminopeptidase</fullName>
        <ecNumber evidence="1">3.4.11.1</ecNumber>
    </recommendedName>
    <alternativeName>
        <fullName evidence="1">Leucine aminopeptidase</fullName>
        <shortName evidence="1">LAP</shortName>
        <ecNumber evidence="1">3.4.11.10</ecNumber>
    </alternativeName>
    <alternativeName>
        <fullName evidence="1">Leucyl aminopeptidase</fullName>
    </alternativeName>
</protein>
<accession>B0BQ37</accession>
<reference key="1">
    <citation type="journal article" date="2008" name="PLoS ONE">
        <title>Genome biology of Actinobacillus pleuropneumoniae JL03, an isolate of serotype 3 prevalent in China.</title>
        <authorList>
            <person name="Xu Z."/>
            <person name="Zhou Y."/>
            <person name="Li L."/>
            <person name="Zhou R."/>
            <person name="Xiao S."/>
            <person name="Wan Y."/>
            <person name="Zhang S."/>
            <person name="Wang K."/>
            <person name="Li W."/>
            <person name="Li L."/>
            <person name="Jin H."/>
            <person name="Kang M."/>
            <person name="Dalai B."/>
            <person name="Li T."/>
            <person name="Liu L."/>
            <person name="Cheng Y."/>
            <person name="Zhang L."/>
            <person name="Xu T."/>
            <person name="Zheng H."/>
            <person name="Pu S."/>
            <person name="Wang B."/>
            <person name="Gu W."/>
            <person name="Zhang X.L."/>
            <person name="Zhu G.-F."/>
            <person name="Wang S."/>
            <person name="Zhao G.-P."/>
            <person name="Chen H."/>
        </authorList>
    </citation>
    <scope>NUCLEOTIDE SEQUENCE [LARGE SCALE GENOMIC DNA]</scope>
    <source>
        <strain>JL03</strain>
    </source>
</reference>
<name>AMPA_ACTPJ</name>
<sequence length="499" mass="54202">MEFSVKNGSVEKQRTACLVVGVYEPRRLSAAAEQLDKLSEGYISTLLRRGDLEGKAGQTLLLHNVPNVPADRVLLVGCGKERELTERQYKQIIQKMVQAVSETGSMEVVCFLTELHVKGRTSYWNVRFAIEAIQESLYSYNDFKSIKPEVRREFRRVIFNVANRKDLADAERALEQGKAISTGVAFAKNVANCPPNVCNPAYLAELAKGLAAEYDNIRTTVIDEAEMAALGMNAYLAVSRGSQNPAYLSVIEYKNHPNPDAKPIVLVGKGLTFDSGGISIKPSDSMDEMKYDMGGAASVYGTMKALAEMKLPLNVIGVLAGCENMPDGNAYRPGDILTTMNGLTVEVLNTDAEGRLVLCDTLTYVERFEPELVIDMATLTGACMIALGAHNSGLMSTSNVLANDLLNAAEQADDKAWRLPLGEEYQEQLKSNFADLANIGGRLGGAITAGQLLSNFTKKYVWAHLDIAGTAWKSGVAKGATGRPVSLLSQFLINKANNQ</sequence>
<keyword id="KW-0031">Aminopeptidase</keyword>
<keyword id="KW-0963">Cytoplasm</keyword>
<keyword id="KW-0378">Hydrolase</keyword>
<keyword id="KW-0464">Manganese</keyword>
<keyword id="KW-0479">Metal-binding</keyword>
<keyword id="KW-0645">Protease</keyword>
<evidence type="ECO:0000255" key="1">
    <source>
        <dbReference type="HAMAP-Rule" id="MF_00181"/>
    </source>
</evidence>